<keyword id="KW-0002">3D-structure</keyword>
<keyword id="KW-0227">DNA damage</keyword>
<keyword id="KW-0234">DNA repair</keyword>
<keyword id="KW-1185">Reference proteome</keyword>
<dbReference type="EMBL" id="AE000657">
    <property type="protein sequence ID" value="AAC07483.1"/>
    <property type="molecule type" value="Genomic_DNA"/>
</dbReference>
<dbReference type="PIR" id="D70436">
    <property type="entry name" value="D70436"/>
</dbReference>
<dbReference type="RefSeq" id="NP_214083.1">
    <property type="nucleotide sequence ID" value="NC_000918.1"/>
</dbReference>
<dbReference type="RefSeq" id="WP_010881021.1">
    <property type="nucleotide sequence ID" value="NC_000918.1"/>
</dbReference>
<dbReference type="PDB" id="5B42">
    <property type="method" value="X-ray"/>
    <property type="resolution" value="1.35 A"/>
    <property type="chains" value="A=325-425"/>
</dbReference>
<dbReference type="PDB" id="5X9Y">
    <property type="method" value="X-ray"/>
    <property type="resolution" value="3.44 A"/>
    <property type="chains" value="A/B/C=9-315"/>
</dbReference>
<dbReference type="PDB" id="5Z41">
    <property type="method" value="X-ray"/>
    <property type="resolution" value="1.70 A"/>
    <property type="chains" value="A=324-425"/>
</dbReference>
<dbReference type="PDB" id="5Z42">
    <property type="method" value="X-ray"/>
    <property type="resolution" value="1.30 A"/>
    <property type="chains" value="A=324-425"/>
</dbReference>
<dbReference type="PDB" id="6LZI">
    <property type="method" value="X-ray"/>
    <property type="resolution" value="1.69 A"/>
    <property type="chains" value="A=9-315"/>
</dbReference>
<dbReference type="PDB" id="6LZJ">
    <property type="method" value="X-ray"/>
    <property type="resolution" value="1.73 A"/>
    <property type="chains" value="A=9-315"/>
</dbReference>
<dbReference type="PDB" id="6LZK">
    <property type="method" value="X-ray"/>
    <property type="resolution" value="3.16 A"/>
    <property type="chains" value="A/B/C=9-315"/>
</dbReference>
<dbReference type="PDB" id="8H1E">
    <property type="method" value="X-ray"/>
    <property type="resolution" value="1.22 A"/>
    <property type="chains" value="A=324-425"/>
</dbReference>
<dbReference type="PDB" id="8H1F">
    <property type="method" value="X-ray"/>
    <property type="resolution" value="1.22 A"/>
    <property type="chains" value="A=324-425"/>
</dbReference>
<dbReference type="PDB" id="8H1G">
    <property type="method" value="X-ray"/>
    <property type="resolution" value="1.43 A"/>
    <property type="chains" value="A=324-425"/>
</dbReference>
<dbReference type="PDBsum" id="5B42"/>
<dbReference type="PDBsum" id="5X9Y"/>
<dbReference type="PDBsum" id="5Z41"/>
<dbReference type="PDBsum" id="5Z42"/>
<dbReference type="PDBsum" id="6LZI"/>
<dbReference type="PDBsum" id="6LZJ"/>
<dbReference type="PDBsum" id="6LZK"/>
<dbReference type="PDBsum" id="8H1E"/>
<dbReference type="PDBsum" id="8H1F"/>
<dbReference type="PDBsum" id="8H1G"/>
<dbReference type="SMR" id="O67518"/>
<dbReference type="FunCoup" id="O67518">
    <property type="interactions" value="222"/>
</dbReference>
<dbReference type="STRING" id="224324.aq_1578"/>
<dbReference type="EnsemblBacteria" id="AAC07483">
    <property type="protein sequence ID" value="AAC07483"/>
    <property type="gene ID" value="aq_1578"/>
</dbReference>
<dbReference type="KEGG" id="aae:aq_1578"/>
<dbReference type="PATRIC" id="fig|224324.8.peg.1217"/>
<dbReference type="eggNOG" id="COG0323">
    <property type="taxonomic scope" value="Bacteria"/>
</dbReference>
<dbReference type="HOGENOM" id="CLU_004131_4_1_0"/>
<dbReference type="InParanoid" id="O67518"/>
<dbReference type="OrthoDB" id="9763467at2"/>
<dbReference type="Proteomes" id="UP000000798">
    <property type="component" value="Chromosome"/>
</dbReference>
<dbReference type="GO" id="GO:0032300">
    <property type="term" value="C:mismatch repair complex"/>
    <property type="evidence" value="ECO:0000318"/>
    <property type="project" value="GO_Central"/>
</dbReference>
<dbReference type="GO" id="GO:0005524">
    <property type="term" value="F:ATP binding"/>
    <property type="evidence" value="ECO:0007669"/>
    <property type="project" value="InterPro"/>
</dbReference>
<dbReference type="GO" id="GO:0016887">
    <property type="term" value="F:ATP hydrolysis activity"/>
    <property type="evidence" value="ECO:0000318"/>
    <property type="project" value="GO_Central"/>
</dbReference>
<dbReference type="GO" id="GO:0140664">
    <property type="term" value="F:ATP-dependent DNA damage sensor activity"/>
    <property type="evidence" value="ECO:0007669"/>
    <property type="project" value="InterPro"/>
</dbReference>
<dbReference type="GO" id="GO:0030983">
    <property type="term" value="F:mismatched DNA binding"/>
    <property type="evidence" value="ECO:0007669"/>
    <property type="project" value="InterPro"/>
</dbReference>
<dbReference type="GO" id="GO:0006298">
    <property type="term" value="P:mismatch repair"/>
    <property type="evidence" value="ECO:0000318"/>
    <property type="project" value="GO_Central"/>
</dbReference>
<dbReference type="CDD" id="cd16926">
    <property type="entry name" value="HATPase_MutL-MLH-PMS-like"/>
    <property type="match status" value="1"/>
</dbReference>
<dbReference type="CDD" id="cd00782">
    <property type="entry name" value="MutL_Trans"/>
    <property type="match status" value="1"/>
</dbReference>
<dbReference type="FunFam" id="3.30.1540.20:FF:000001">
    <property type="entry name" value="DNA mismatch repair endonuclease MutL"/>
    <property type="match status" value="1"/>
</dbReference>
<dbReference type="FunFam" id="3.30.565.10:FF:000003">
    <property type="entry name" value="DNA mismatch repair endonuclease MutL"/>
    <property type="match status" value="1"/>
</dbReference>
<dbReference type="Gene3D" id="3.30.230.10">
    <property type="match status" value="1"/>
</dbReference>
<dbReference type="Gene3D" id="3.30.565.10">
    <property type="entry name" value="Histidine kinase-like ATPase, C-terminal domain"/>
    <property type="match status" value="1"/>
</dbReference>
<dbReference type="Gene3D" id="3.30.1540.20">
    <property type="entry name" value="MutL, C-terminal domain, dimerisation subdomain"/>
    <property type="match status" value="1"/>
</dbReference>
<dbReference type="HAMAP" id="MF_00149">
    <property type="entry name" value="DNA_mis_repair"/>
    <property type="match status" value="1"/>
</dbReference>
<dbReference type="InterPro" id="IPR014762">
    <property type="entry name" value="DNA_mismatch_repair_CS"/>
</dbReference>
<dbReference type="InterPro" id="IPR020667">
    <property type="entry name" value="DNA_mismatch_repair_MutL"/>
</dbReference>
<dbReference type="InterPro" id="IPR013507">
    <property type="entry name" value="DNA_mismatch_S5_2-like"/>
</dbReference>
<dbReference type="InterPro" id="IPR036890">
    <property type="entry name" value="HATPase_C_sf"/>
</dbReference>
<dbReference type="InterPro" id="IPR002099">
    <property type="entry name" value="MutL/Mlh/PMS"/>
</dbReference>
<dbReference type="InterPro" id="IPR038973">
    <property type="entry name" value="MutL/Mlh/Pms-like"/>
</dbReference>
<dbReference type="InterPro" id="IPR014790">
    <property type="entry name" value="MutL_C"/>
</dbReference>
<dbReference type="InterPro" id="IPR042120">
    <property type="entry name" value="MutL_C_dimsub"/>
</dbReference>
<dbReference type="InterPro" id="IPR037198">
    <property type="entry name" value="MutL_C_sf"/>
</dbReference>
<dbReference type="InterPro" id="IPR020568">
    <property type="entry name" value="Ribosomal_Su5_D2-typ_SF"/>
</dbReference>
<dbReference type="InterPro" id="IPR014721">
    <property type="entry name" value="Ribsml_uS5_D2-typ_fold_subgr"/>
</dbReference>
<dbReference type="NCBIfam" id="TIGR00585">
    <property type="entry name" value="mutl"/>
    <property type="match status" value="1"/>
</dbReference>
<dbReference type="PANTHER" id="PTHR10073">
    <property type="entry name" value="DNA MISMATCH REPAIR PROTEIN MLH, PMS, MUTL"/>
    <property type="match status" value="1"/>
</dbReference>
<dbReference type="PANTHER" id="PTHR10073:SF12">
    <property type="entry name" value="DNA MISMATCH REPAIR PROTEIN MLH1"/>
    <property type="match status" value="1"/>
</dbReference>
<dbReference type="Pfam" id="PF01119">
    <property type="entry name" value="DNA_mis_repair"/>
    <property type="match status" value="1"/>
</dbReference>
<dbReference type="Pfam" id="PF13589">
    <property type="entry name" value="HATPase_c_3"/>
    <property type="match status" value="1"/>
</dbReference>
<dbReference type="Pfam" id="PF08676">
    <property type="entry name" value="MutL_C"/>
    <property type="match status" value="1"/>
</dbReference>
<dbReference type="SMART" id="SM01340">
    <property type="entry name" value="DNA_mis_repair"/>
    <property type="match status" value="1"/>
</dbReference>
<dbReference type="SUPFAM" id="SSF55874">
    <property type="entry name" value="ATPase domain of HSP90 chaperone/DNA topoisomerase II/histidine kinase"/>
    <property type="match status" value="1"/>
</dbReference>
<dbReference type="SUPFAM" id="SSF118116">
    <property type="entry name" value="DNA mismatch repair protein MutL"/>
    <property type="match status" value="1"/>
</dbReference>
<dbReference type="SUPFAM" id="SSF54211">
    <property type="entry name" value="Ribosomal protein S5 domain 2-like"/>
    <property type="match status" value="1"/>
</dbReference>
<dbReference type="PROSITE" id="PS00058">
    <property type="entry name" value="DNA_MISMATCH_REPAIR_1"/>
    <property type="match status" value="1"/>
</dbReference>
<protein>
    <recommendedName>
        <fullName>DNA mismatch repair protein MutL</fullName>
    </recommendedName>
</protein>
<evidence type="ECO:0000250" key="1"/>
<evidence type="ECO:0000305" key="2"/>
<evidence type="ECO:0007829" key="3">
    <source>
        <dbReference type="PDB" id="5Z42"/>
    </source>
</evidence>
<evidence type="ECO:0007829" key="4">
    <source>
        <dbReference type="PDB" id="6LZI"/>
    </source>
</evidence>
<evidence type="ECO:0007829" key="5">
    <source>
        <dbReference type="PDB" id="6LZJ"/>
    </source>
</evidence>
<accession>O67518</accession>
<organism>
    <name type="scientific">Aquifex aeolicus (strain VF5)</name>
    <dbReference type="NCBI Taxonomy" id="224324"/>
    <lineage>
        <taxon>Bacteria</taxon>
        <taxon>Pseudomonadati</taxon>
        <taxon>Aquificota</taxon>
        <taxon>Aquificia</taxon>
        <taxon>Aquificales</taxon>
        <taxon>Aquificaceae</taxon>
        <taxon>Aquifex</taxon>
    </lineage>
</organism>
<proteinExistence type="evidence at protein level"/>
<feature type="chain" id="PRO_0000177924" description="DNA mismatch repair protein MutL">
    <location>
        <begin position="1"/>
        <end position="425"/>
    </location>
</feature>
<feature type="helix" evidence="4">
    <location>
        <begin position="23"/>
        <end position="36"/>
    </location>
</feature>
<feature type="strand" evidence="4">
    <location>
        <begin position="40"/>
        <end position="47"/>
    </location>
</feature>
<feature type="turn" evidence="5">
    <location>
        <begin position="48"/>
        <end position="51"/>
    </location>
</feature>
<feature type="strand" evidence="4">
    <location>
        <begin position="53"/>
        <end position="58"/>
    </location>
</feature>
<feature type="helix" evidence="4">
    <location>
        <begin position="65"/>
        <end position="68"/>
    </location>
</feature>
<feature type="helix" evidence="4">
    <location>
        <begin position="69"/>
        <end position="71"/>
    </location>
</feature>
<feature type="helix" evidence="4">
    <location>
        <begin position="98"/>
        <end position="103"/>
    </location>
</feature>
<feature type="strand" evidence="4">
    <location>
        <begin position="106"/>
        <end position="113"/>
    </location>
</feature>
<feature type="strand" evidence="4">
    <location>
        <begin position="118"/>
        <end position="126"/>
    </location>
</feature>
<feature type="strand" evidence="4">
    <location>
        <begin position="129"/>
        <end position="136"/>
    </location>
</feature>
<feature type="strand" evidence="4">
    <location>
        <begin position="140"/>
        <end position="148"/>
    </location>
</feature>
<feature type="turn" evidence="4">
    <location>
        <begin position="149"/>
        <end position="152"/>
    </location>
</feature>
<feature type="helix" evidence="4">
    <location>
        <begin position="154"/>
        <end position="158"/>
    </location>
</feature>
<feature type="helix" evidence="4">
    <location>
        <begin position="163"/>
        <end position="180"/>
    </location>
</feature>
<feature type="strand" evidence="4">
    <location>
        <begin position="184"/>
        <end position="190"/>
    </location>
</feature>
<feature type="strand" evidence="4">
    <location>
        <begin position="193"/>
        <end position="198"/>
    </location>
</feature>
<feature type="helix" evidence="4">
    <location>
        <begin position="203"/>
        <end position="211"/>
    </location>
</feature>
<feature type="strand" evidence="4">
    <location>
        <begin position="216"/>
        <end position="220"/>
    </location>
</feature>
<feature type="strand" evidence="4">
    <location>
        <begin position="226"/>
        <end position="232"/>
    </location>
</feature>
<feature type="strand" evidence="4">
    <location>
        <begin position="239"/>
        <end position="244"/>
    </location>
</feature>
<feature type="strand" evidence="4">
    <location>
        <begin position="247"/>
        <end position="249"/>
    </location>
</feature>
<feature type="helix" evidence="4">
    <location>
        <begin position="252"/>
        <end position="261"/>
    </location>
</feature>
<feature type="strand" evidence="4">
    <location>
        <begin position="267"/>
        <end position="273"/>
    </location>
</feature>
<feature type="helix" evidence="4">
    <location>
        <begin position="299"/>
        <end position="305"/>
    </location>
</feature>
<feature type="strand" evidence="3">
    <location>
        <begin position="329"/>
        <end position="334"/>
    </location>
</feature>
<feature type="turn" evidence="3">
    <location>
        <begin position="335"/>
        <end position="337"/>
    </location>
</feature>
<feature type="strand" evidence="3">
    <location>
        <begin position="338"/>
        <end position="342"/>
    </location>
</feature>
<feature type="strand" evidence="3">
    <location>
        <begin position="344"/>
        <end position="351"/>
    </location>
</feature>
<feature type="helix" evidence="3">
    <location>
        <begin position="352"/>
        <end position="364"/>
    </location>
</feature>
<feature type="helix" evidence="3">
    <location>
        <begin position="367"/>
        <end position="373"/>
    </location>
</feature>
<feature type="helix" evidence="3">
    <location>
        <begin position="383"/>
        <end position="395"/>
    </location>
</feature>
<feature type="strand" evidence="3">
    <location>
        <begin position="399"/>
        <end position="401"/>
    </location>
</feature>
<feature type="strand" evidence="3">
    <location>
        <begin position="407"/>
        <end position="413"/>
    </location>
</feature>
<feature type="helix" evidence="3">
    <location>
        <begin position="414"/>
        <end position="420"/>
    </location>
</feature>
<reference key="1">
    <citation type="journal article" date="1998" name="Nature">
        <title>The complete genome of the hyperthermophilic bacterium Aquifex aeolicus.</title>
        <authorList>
            <person name="Deckert G."/>
            <person name="Warren P.V."/>
            <person name="Gaasterland T."/>
            <person name="Young W.G."/>
            <person name="Lenox A.L."/>
            <person name="Graham D.E."/>
            <person name="Overbeek R."/>
            <person name="Snead M.A."/>
            <person name="Keller M."/>
            <person name="Aujay M."/>
            <person name="Huber R."/>
            <person name="Feldman R.A."/>
            <person name="Short J.M."/>
            <person name="Olsen G.J."/>
            <person name="Swanson R.V."/>
        </authorList>
    </citation>
    <scope>NUCLEOTIDE SEQUENCE [LARGE SCALE GENOMIC DNA]</scope>
    <source>
        <strain>VF5</strain>
    </source>
</reference>
<name>MUTL_AQUAE</name>
<sequence length="425" mass="49594">MFVKLLPPEVRKVIAAGEVIESPVDVVKELVENSLDAKATKVEVEIVKGGKRLIRVKDNGTGIHPEDVEKVVLQGATSKIETEKDLMNISTYGFRGEALYSISSVSKFKLRSRFFQEKEGKEIEVEAGNILGTRRVGMPVGTEVEVRDLFFNLPVRRKFLKKEDTERRKVLELIKEYALTNPEVEFTLFSEGRETLKLKKSSLKERVEEVFQTKTEELYAEREGITLRAFVSRNQRQGKYYVFINKRPIQNKNLKEFLRKVFGYKTLVVLYAELPPFMVDFNVHPKKKEVNILKERKFLELVRELAGKEKPIVDIPLSQPVKTYKPTYEILGQMDETFILVKDSEYLYFVDQHLLEERINYEKLKDENLACRISVKAGQKLSEEKIRELIKTWRNLENPHVCPHGRPIYYKIPLREIYEKVGRNY</sequence>
<gene>
    <name type="primary">mutL</name>
    <name type="ordered locus">aq_1578</name>
</gene>
<comment type="function">
    <text evidence="1">This protein is involved in the repair of mismatches in DNA. It is required for dam-dependent methyl-directed DNA mismatch repair. May act as a 'molecular matchmaker', a protein that promotes the formation of a stable complex between two or more DNA-binding proteins in an ATP-dependent manner without itself being part of a final effector complex (By similarity).</text>
</comment>
<comment type="similarity">
    <text evidence="2">Belongs to the DNA mismatch repair MutL/HexB family.</text>
</comment>